<feature type="chain" id="PRO_0000293218" description="Small ribosomal subunit protein uS5">
    <location>
        <begin position="1"/>
        <end position="202"/>
    </location>
</feature>
<feature type="domain" description="S5 DRBM" evidence="1">
    <location>
        <begin position="50"/>
        <end position="113"/>
    </location>
</feature>
<keyword id="KW-0687">Ribonucleoprotein</keyword>
<keyword id="KW-0689">Ribosomal protein</keyword>
<keyword id="KW-0694">RNA-binding</keyword>
<keyword id="KW-0699">rRNA-binding</keyword>
<proteinExistence type="inferred from homology"/>
<organism>
    <name type="scientific">Pyrobaculum islandicum (strain DSM 4184 / JCM 9189 / GEO3)</name>
    <dbReference type="NCBI Taxonomy" id="384616"/>
    <lineage>
        <taxon>Archaea</taxon>
        <taxon>Thermoproteota</taxon>
        <taxon>Thermoprotei</taxon>
        <taxon>Thermoproteales</taxon>
        <taxon>Thermoproteaceae</taxon>
        <taxon>Pyrobaculum</taxon>
    </lineage>
</organism>
<name>RS5_PYRIL</name>
<reference key="1">
    <citation type="submission" date="2006-12" db="EMBL/GenBank/DDBJ databases">
        <title>Complete sequence of Pyrobaculum islandicum DSM 4184.</title>
        <authorList>
            <person name="Copeland A."/>
            <person name="Lucas S."/>
            <person name="Lapidus A."/>
            <person name="Barry K."/>
            <person name="Detter J.C."/>
            <person name="Glavina del Rio T."/>
            <person name="Dalin E."/>
            <person name="Tice H."/>
            <person name="Pitluck S."/>
            <person name="Meincke L."/>
            <person name="Brettin T."/>
            <person name="Bruce D."/>
            <person name="Han C."/>
            <person name="Tapia R."/>
            <person name="Gilna P."/>
            <person name="Schmutz J."/>
            <person name="Larimer F."/>
            <person name="Land M."/>
            <person name="Hauser L."/>
            <person name="Kyrpides N."/>
            <person name="Mikhailova N."/>
            <person name="Cozen A.E."/>
            <person name="Fitz-Gibbon S.T."/>
            <person name="House C.H."/>
            <person name="Saltikov C."/>
            <person name="Lowe T."/>
            <person name="Richardson P."/>
        </authorList>
    </citation>
    <scope>NUCLEOTIDE SEQUENCE [LARGE SCALE GENOMIC DNA]</scope>
    <source>
        <strain>DSM 4184 / JCM 9189 / GEO3</strain>
    </source>
</reference>
<evidence type="ECO:0000255" key="1">
    <source>
        <dbReference type="HAMAP-Rule" id="MF_01307"/>
    </source>
</evidence>
<evidence type="ECO:0000305" key="2"/>
<sequence length="202" mass="22286">MSVVDLSLWEPRTELGRLVKEGKIRTIDEIFANNYIIKEPEIVDILLPGLKQEILNINVVQRQTHAGERSQFQVVVAVGNEDGYVGVGIGKAKQVRQAIEKAVREAKLNLTPVRRGCGSWKCSCDEPHSVPFVVRGKSGSVEVTLIPAPKGVGLVAGDVAKVVLRLAGIKDVWTQTRGDTRTTLNFAMAVYNALRNTYYFKI</sequence>
<gene>
    <name evidence="1" type="primary">rps5</name>
    <name type="ordered locus">Pisl_1306</name>
</gene>
<dbReference type="EMBL" id="CP000504">
    <property type="protein sequence ID" value="ABL88469.1"/>
    <property type="molecule type" value="Genomic_DNA"/>
</dbReference>
<dbReference type="RefSeq" id="WP_011763044.1">
    <property type="nucleotide sequence ID" value="NC_008701.1"/>
</dbReference>
<dbReference type="SMR" id="A1RU37"/>
<dbReference type="STRING" id="384616.Pisl_1306"/>
<dbReference type="GeneID" id="4618034"/>
<dbReference type="KEGG" id="pis:Pisl_1306"/>
<dbReference type="eggNOG" id="arCOG04087">
    <property type="taxonomic scope" value="Archaea"/>
</dbReference>
<dbReference type="HOGENOM" id="CLU_065898_0_1_2"/>
<dbReference type="OrthoDB" id="38155at2157"/>
<dbReference type="Proteomes" id="UP000002595">
    <property type="component" value="Chromosome"/>
</dbReference>
<dbReference type="GO" id="GO:0022627">
    <property type="term" value="C:cytosolic small ribosomal subunit"/>
    <property type="evidence" value="ECO:0007669"/>
    <property type="project" value="TreeGrafter"/>
</dbReference>
<dbReference type="GO" id="GO:0019843">
    <property type="term" value="F:rRNA binding"/>
    <property type="evidence" value="ECO:0007669"/>
    <property type="project" value="UniProtKB-UniRule"/>
</dbReference>
<dbReference type="GO" id="GO:0003735">
    <property type="term" value="F:structural constituent of ribosome"/>
    <property type="evidence" value="ECO:0007669"/>
    <property type="project" value="InterPro"/>
</dbReference>
<dbReference type="GO" id="GO:0006412">
    <property type="term" value="P:translation"/>
    <property type="evidence" value="ECO:0007669"/>
    <property type="project" value="UniProtKB-UniRule"/>
</dbReference>
<dbReference type="FunFam" id="3.30.160.20:FF:000002">
    <property type="entry name" value="40S ribosomal protein S2"/>
    <property type="match status" value="1"/>
</dbReference>
<dbReference type="FunFam" id="3.30.230.10:FF:000004">
    <property type="entry name" value="40S ribosomal protein S2"/>
    <property type="match status" value="1"/>
</dbReference>
<dbReference type="Gene3D" id="3.30.160.20">
    <property type="match status" value="1"/>
</dbReference>
<dbReference type="Gene3D" id="3.30.230.10">
    <property type="match status" value="1"/>
</dbReference>
<dbReference type="HAMAP" id="MF_01307_A">
    <property type="entry name" value="Ribosomal_uS5_A"/>
    <property type="match status" value="1"/>
</dbReference>
<dbReference type="InterPro" id="IPR020568">
    <property type="entry name" value="Ribosomal_Su5_D2-typ_SF"/>
</dbReference>
<dbReference type="InterPro" id="IPR000851">
    <property type="entry name" value="Ribosomal_uS5"/>
</dbReference>
<dbReference type="InterPro" id="IPR047866">
    <property type="entry name" value="Ribosomal_uS5_arc"/>
</dbReference>
<dbReference type="InterPro" id="IPR005324">
    <property type="entry name" value="Ribosomal_uS5_C"/>
</dbReference>
<dbReference type="InterPro" id="IPR005711">
    <property type="entry name" value="Ribosomal_uS5_euk/arc"/>
</dbReference>
<dbReference type="InterPro" id="IPR013810">
    <property type="entry name" value="Ribosomal_uS5_N"/>
</dbReference>
<dbReference type="InterPro" id="IPR018192">
    <property type="entry name" value="Ribosomal_uS5_N_CS"/>
</dbReference>
<dbReference type="InterPro" id="IPR014721">
    <property type="entry name" value="Ribsml_uS5_D2-typ_fold_subgr"/>
</dbReference>
<dbReference type="NCBIfam" id="NF003125">
    <property type="entry name" value="PRK04044.1"/>
    <property type="match status" value="1"/>
</dbReference>
<dbReference type="NCBIfam" id="TIGR01020">
    <property type="entry name" value="uS5_euk_arch"/>
    <property type="match status" value="1"/>
</dbReference>
<dbReference type="PANTHER" id="PTHR13718:SF4">
    <property type="entry name" value="40S RIBOSOMAL PROTEIN S2"/>
    <property type="match status" value="1"/>
</dbReference>
<dbReference type="PANTHER" id="PTHR13718">
    <property type="entry name" value="RIBOSOMAL S SUBUNIT"/>
    <property type="match status" value="1"/>
</dbReference>
<dbReference type="Pfam" id="PF00333">
    <property type="entry name" value="Ribosomal_S5"/>
    <property type="match status" value="1"/>
</dbReference>
<dbReference type="Pfam" id="PF03719">
    <property type="entry name" value="Ribosomal_S5_C"/>
    <property type="match status" value="1"/>
</dbReference>
<dbReference type="SUPFAM" id="SSF54768">
    <property type="entry name" value="dsRNA-binding domain-like"/>
    <property type="match status" value="1"/>
</dbReference>
<dbReference type="SUPFAM" id="SSF54211">
    <property type="entry name" value="Ribosomal protein S5 domain 2-like"/>
    <property type="match status" value="1"/>
</dbReference>
<dbReference type="PROSITE" id="PS00585">
    <property type="entry name" value="RIBOSOMAL_S5"/>
    <property type="match status" value="1"/>
</dbReference>
<dbReference type="PROSITE" id="PS50881">
    <property type="entry name" value="S5_DSRBD"/>
    <property type="match status" value="1"/>
</dbReference>
<protein>
    <recommendedName>
        <fullName evidence="1">Small ribosomal subunit protein uS5</fullName>
    </recommendedName>
    <alternativeName>
        <fullName evidence="2">30S ribosomal protein S5</fullName>
    </alternativeName>
</protein>
<comment type="function">
    <text evidence="1">With S4 and S12 plays an important role in translational accuracy.</text>
</comment>
<comment type="subunit">
    <text evidence="1">Part of the 30S ribosomal subunit. Contacts protein S4.</text>
</comment>
<comment type="domain">
    <text>The N-terminal domain interacts with the head of the 30S subunit; the C-terminal domain interacts with the body and contacts protein S4. The interaction surface between S4 and S5 is involved in control of translational fidelity.</text>
</comment>
<comment type="similarity">
    <text evidence="1">Belongs to the universal ribosomal protein uS5 family.</text>
</comment>
<accession>A1RU37</accession>